<organism>
    <name type="scientific">Pseudomonas entomophila (strain L48)</name>
    <dbReference type="NCBI Taxonomy" id="384676"/>
    <lineage>
        <taxon>Bacteria</taxon>
        <taxon>Pseudomonadati</taxon>
        <taxon>Pseudomonadota</taxon>
        <taxon>Gammaproteobacteria</taxon>
        <taxon>Pseudomonadales</taxon>
        <taxon>Pseudomonadaceae</taxon>
        <taxon>Pseudomonas</taxon>
    </lineage>
</organism>
<keyword id="KW-0012">Acyltransferase</keyword>
<keyword id="KW-0963">Cytoplasm</keyword>
<keyword id="KW-0808">Transferase</keyword>
<accession>Q1IBD5</accession>
<comment type="function">
    <text evidence="1">Functions in the N-end rule pathway of protein degradation where it conjugates Leu, Phe and, less efficiently, Met from aminoacyl-tRNAs to the N-termini of proteins containing an N-terminal arginine or lysine.</text>
</comment>
<comment type="catalytic activity">
    <reaction evidence="1">
        <text>N-terminal L-lysyl-[protein] + L-leucyl-tRNA(Leu) = N-terminal L-leucyl-L-lysyl-[protein] + tRNA(Leu) + H(+)</text>
        <dbReference type="Rhea" id="RHEA:12340"/>
        <dbReference type="Rhea" id="RHEA-COMP:9613"/>
        <dbReference type="Rhea" id="RHEA-COMP:9622"/>
        <dbReference type="Rhea" id="RHEA-COMP:12670"/>
        <dbReference type="Rhea" id="RHEA-COMP:12671"/>
        <dbReference type="ChEBI" id="CHEBI:15378"/>
        <dbReference type="ChEBI" id="CHEBI:65249"/>
        <dbReference type="ChEBI" id="CHEBI:78442"/>
        <dbReference type="ChEBI" id="CHEBI:78494"/>
        <dbReference type="ChEBI" id="CHEBI:133043"/>
        <dbReference type="EC" id="2.3.2.6"/>
    </reaction>
</comment>
<comment type="catalytic activity">
    <reaction evidence="1">
        <text>N-terminal L-arginyl-[protein] + L-leucyl-tRNA(Leu) = N-terminal L-leucyl-L-arginyl-[protein] + tRNA(Leu) + H(+)</text>
        <dbReference type="Rhea" id="RHEA:50416"/>
        <dbReference type="Rhea" id="RHEA-COMP:9613"/>
        <dbReference type="Rhea" id="RHEA-COMP:9622"/>
        <dbReference type="Rhea" id="RHEA-COMP:12672"/>
        <dbReference type="Rhea" id="RHEA-COMP:12673"/>
        <dbReference type="ChEBI" id="CHEBI:15378"/>
        <dbReference type="ChEBI" id="CHEBI:64719"/>
        <dbReference type="ChEBI" id="CHEBI:78442"/>
        <dbReference type="ChEBI" id="CHEBI:78494"/>
        <dbReference type="ChEBI" id="CHEBI:133044"/>
        <dbReference type="EC" id="2.3.2.6"/>
    </reaction>
</comment>
<comment type="catalytic activity">
    <reaction evidence="1">
        <text>L-phenylalanyl-tRNA(Phe) + an N-terminal L-alpha-aminoacyl-[protein] = an N-terminal L-phenylalanyl-L-alpha-aminoacyl-[protein] + tRNA(Phe)</text>
        <dbReference type="Rhea" id="RHEA:43632"/>
        <dbReference type="Rhea" id="RHEA-COMP:9668"/>
        <dbReference type="Rhea" id="RHEA-COMP:9699"/>
        <dbReference type="Rhea" id="RHEA-COMP:10636"/>
        <dbReference type="Rhea" id="RHEA-COMP:10637"/>
        <dbReference type="ChEBI" id="CHEBI:78442"/>
        <dbReference type="ChEBI" id="CHEBI:78531"/>
        <dbReference type="ChEBI" id="CHEBI:78597"/>
        <dbReference type="ChEBI" id="CHEBI:83561"/>
        <dbReference type="EC" id="2.3.2.6"/>
    </reaction>
</comment>
<comment type="subcellular location">
    <subcellularLocation>
        <location evidence="1">Cytoplasm</location>
    </subcellularLocation>
</comment>
<comment type="similarity">
    <text evidence="1">Belongs to the L/F-transferase family.</text>
</comment>
<sequence length="226" mass="25321">MLTWLTRDSLTFPPLEKALHDPNGLLAAGGDLTPERLVAAYRHGCFPWYQDGQPILWWSPDPRTVLFPEELHISRSLAKFIRQGHYQVSFDSDFPAVIEACAAPRDYADGTWITDSMRAAYCELHRRGFAHSVEVRREGELVGGLYGLAMGRLFFGESMFSRADNASKVGFVALVEHLKQAGFVLIDCQMPTNHLHSLGARAISRAEFADHLARHLDQPSGASWVR</sequence>
<gene>
    <name evidence="1" type="primary">aat</name>
    <name type="ordered locus">PSEEN2210</name>
</gene>
<protein>
    <recommendedName>
        <fullName evidence="1">Leucyl/phenylalanyl-tRNA--protein transferase</fullName>
        <ecNumber evidence="1">2.3.2.6</ecNumber>
    </recommendedName>
    <alternativeName>
        <fullName evidence="1">L/F-transferase</fullName>
    </alternativeName>
    <alternativeName>
        <fullName evidence="1">Leucyltransferase</fullName>
    </alternativeName>
    <alternativeName>
        <fullName evidence="1">Phenyalanyltransferase</fullName>
    </alternativeName>
</protein>
<reference key="1">
    <citation type="journal article" date="2006" name="Nat. Biotechnol.">
        <title>Complete genome sequence of the entomopathogenic and metabolically versatile soil bacterium Pseudomonas entomophila.</title>
        <authorList>
            <person name="Vodovar N."/>
            <person name="Vallenet D."/>
            <person name="Cruveiller S."/>
            <person name="Rouy Z."/>
            <person name="Barbe V."/>
            <person name="Acosta C."/>
            <person name="Cattolico L."/>
            <person name="Jubin C."/>
            <person name="Lajus A."/>
            <person name="Segurens B."/>
            <person name="Vacherie B."/>
            <person name="Wincker P."/>
            <person name="Weissenbach J."/>
            <person name="Lemaitre B."/>
            <person name="Medigue C."/>
            <person name="Boccard F."/>
        </authorList>
    </citation>
    <scope>NUCLEOTIDE SEQUENCE [LARGE SCALE GENOMIC DNA]</scope>
    <source>
        <strain>L48</strain>
    </source>
</reference>
<feature type="chain" id="PRO_0000304348" description="Leucyl/phenylalanyl-tRNA--protein transferase">
    <location>
        <begin position="1"/>
        <end position="226"/>
    </location>
</feature>
<proteinExistence type="inferred from homology"/>
<name>LFTR_PSEE4</name>
<dbReference type="EC" id="2.3.2.6" evidence="1"/>
<dbReference type="EMBL" id="CT573326">
    <property type="protein sequence ID" value="CAK15030.1"/>
    <property type="molecule type" value="Genomic_DNA"/>
</dbReference>
<dbReference type="RefSeq" id="WP_011533432.1">
    <property type="nucleotide sequence ID" value="NC_008027.1"/>
</dbReference>
<dbReference type="SMR" id="Q1IBD5"/>
<dbReference type="STRING" id="384676.PSEEN2210"/>
<dbReference type="GeneID" id="32805409"/>
<dbReference type="KEGG" id="pen:PSEEN2210"/>
<dbReference type="eggNOG" id="COG2360">
    <property type="taxonomic scope" value="Bacteria"/>
</dbReference>
<dbReference type="HOGENOM" id="CLU_075045_0_0_6"/>
<dbReference type="OrthoDB" id="9790282at2"/>
<dbReference type="Proteomes" id="UP000000658">
    <property type="component" value="Chromosome"/>
</dbReference>
<dbReference type="GO" id="GO:0005737">
    <property type="term" value="C:cytoplasm"/>
    <property type="evidence" value="ECO:0007669"/>
    <property type="project" value="UniProtKB-SubCell"/>
</dbReference>
<dbReference type="GO" id="GO:0008914">
    <property type="term" value="F:leucyl-tRNA--protein transferase activity"/>
    <property type="evidence" value="ECO:0007669"/>
    <property type="project" value="UniProtKB-UniRule"/>
</dbReference>
<dbReference type="GO" id="GO:0030163">
    <property type="term" value="P:protein catabolic process"/>
    <property type="evidence" value="ECO:0007669"/>
    <property type="project" value="UniProtKB-UniRule"/>
</dbReference>
<dbReference type="FunFam" id="3.30.70.3550:FF:000001">
    <property type="entry name" value="Leucyl/phenylalanyl-tRNA--protein transferase"/>
    <property type="match status" value="1"/>
</dbReference>
<dbReference type="FunFam" id="3.40.630.70:FF:000001">
    <property type="entry name" value="Leucyl/phenylalanyl-tRNA--protein transferase"/>
    <property type="match status" value="1"/>
</dbReference>
<dbReference type="Gene3D" id="3.40.630.70">
    <property type="entry name" value="Leucyl/phenylalanyl-tRNA-protein transferase, C-terminal domain"/>
    <property type="match status" value="1"/>
</dbReference>
<dbReference type="Gene3D" id="3.30.70.3550">
    <property type="entry name" value="Leucyl/phenylalanyl-tRNA-protein transferase, N-terminal domain"/>
    <property type="match status" value="1"/>
</dbReference>
<dbReference type="HAMAP" id="MF_00688">
    <property type="entry name" value="Leu_Phe_trans"/>
    <property type="match status" value="1"/>
</dbReference>
<dbReference type="InterPro" id="IPR016181">
    <property type="entry name" value="Acyl_CoA_acyltransferase"/>
</dbReference>
<dbReference type="InterPro" id="IPR004616">
    <property type="entry name" value="Leu/Phe-tRNA_Trfase"/>
</dbReference>
<dbReference type="InterPro" id="IPR042203">
    <property type="entry name" value="Leu/Phe-tRNA_Trfase_C"/>
</dbReference>
<dbReference type="InterPro" id="IPR042221">
    <property type="entry name" value="Leu/Phe-tRNA_Trfase_N"/>
</dbReference>
<dbReference type="NCBIfam" id="TIGR00667">
    <property type="entry name" value="aat"/>
    <property type="match status" value="1"/>
</dbReference>
<dbReference type="PANTHER" id="PTHR30098">
    <property type="entry name" value="LEUCYL/PHENYLALANYL-TRNA--PROTEIN TRANSFERASE"/>
    <property type="match status" value="1"/>
</dbReference>
<dbReference type="PANTHER" id="PTHR30098:SF2">
    <property type="entry name" value="LEUCYL_PHENYLALANYL-TRNA--PROTEIN TRANSFERASE"/>
    <property type="match status" value="1"/>
</dbReference>
<dbReference type="Pfam" id="PF03588">
    <property type="entry name" value="Leu_Phe_trans"/>
    <property type="match status" value="1"/>
</dbReference>
<dbReference type="SUPFAM" id="SSF55729">
    <property type="entry name" value="Acyl-CoA N-acyltransferases (Nat)"/>
    <property type="match status" value="1"/>
</dbReference>
<evidence type="ECO:0000255" key="1">
    <source>
        <dbReference type="HAMAP-Rule" id="MF_00688"/>
    </source>
</evidence>